<organism>
    <name type="scientific">Dictyostelium discoideum</name>
    <name type="common">Social amoeba</name>
    <dbReference type="NCBI Taxonomy" id="44689"/>
    <lineage>
        <taxon>Eukaryota</taxon>
        <taxon>Amoebozoa</taxon>
        <taxon>Evosea</taxon>
        <taxon>Eumycetozoa</taxon>
        <taxon>Dictyostelia</taxon>
        <taxon>Dictyosteliales</taxon>
        <taxon>Dictyosteliaceae</taxon>
        <taxon>Dictyostelium</taxon>
    </lineage>
</organism>
<accession>Q8WSR7</accession>
<accession>Q54W80</accession>
<name>CTNB_DICDI</name>
<sequence length="254" mass="26347">MMIKYITIAILFIASLVKADLQFSLCPTCVDFINNDMGDLEKIISGGIATSCGAVCSLLPNNIEQGACNLLCDIVGIDEFLKVFNNIGEDADPVWICEELTVCPKNQNSNATVLTSDVSPASGPHGTTFTIGVAYKVESTLGTGEVAVMVTDPTGSNGFGDAQLIVNTQPGQYSTSFSFAATPSEDEQFPAGVYQVQLMICEGSCGAKHSVTFNSVYANFTVTSGPSVTGQMTGTGSGSGSGSGSSSGAAYLRY</sequence>
<comment type="function">
    <text evidence="4">Cell-counting factor that limits the minimum size of the multicellular structure. May up-regulate the expression of both gp24 and gp80, which mediate cell adhesion.</text>
</comment>
<comment type="subcellular location">
    <subcellularLocation>
        <location evidence="4">Secreted</location>
    </subcellularLocation>
</comment>
<comment type="developmental stage">
    <text evidence="4">Expressed in the vegetative cells. Increases during aggregation to mound stages (6-12 hours) and decreases at late developmental stages (18-24 hours).</text>
</comment>
<comment type="disruption phenotype">
    <text evidence="4">Cells form a higher number of smaller aggregates.</text>
</comment>
<comment type="similarity">
    <text evidence="5">Belongs to the countin family.</text>
</comment>
<protein>
    <recommendedName>
        <fullName>Countin-2</fullName>
    </recommendedName>
</protein>
<gene>
    <name type="primary">ctnB</name>
    <name type="ORF">DDB_G0279797</name>
</gene>
<dbReference type="EMBL" id="AB067573">
    <property type="protein sequence ID" value="BAB84187.1"/>
    <property type="molecule type" value="mRNA"/>
</dbReference>
<dbReference type="EMBL" id="AAFI02000033">
    <property type="protein sequence ID" value="EAL67512.1"/>
    <property type="molecule type" value="Genomic_DNA"/>
</dbReference>
<dbReference type="RefSeq" id="XP_641512.1">
    <property type="nucleotide sequence ID" value="XM_636420.1"/>
</dbReference>
<dbReference type="STRING" id="44689.Q8WSR7"/>
<dbReference type="GlyCosmos" id="Q8WSR7">
    <property type="glycosylation" value="2 sites, No reported glycans"/>
</dbReference>
<dbReference type="GlyGen" id="Q8WSR7">
    <property type="glycosylation" value="3 sites"/>
</dbReference>
<dbReference type="PaxDb" id="44689-DDB0214993"/>
<dbReference type="EnsemblProtists" id="EAL67512">
    <property type="protein sequence ID" value="EAL67512"/>
    <property type="gene ID" value="DDB_G0279797"/>
</dbReference>
<dbReference type="GeneID" id="8622253"/>
<dbReference type="KEGG" id="ddi:DDB_G0279797"/>
<dbReference type="dictyBase" id="DDB_G0279797">
    <property type="gene designation" value="ctnB"/>
</dbReference>
<dbReference type="VEuPathDB" id="AmoebaDB:DDB_G0279797"/>
<dbReference type="eggNOG" id="ENOG502S5J5">
    <property type="taxonomic scope" value="Eukaryota"/>
</dbReference>
<dbReference type="HOGENOM" id="CLU_095805_0_0_1"/>
<dbReference type="InParanoid" id="Q8WSR7"/>
<dbReference type="OMA" id="NGQCMSH"/>
<dbReference type="PhylomeDB" id="Q8WSR7"/>
<dbReference type="PRO" id="PR:Q8WSR7"/>
<dbReference type="Proteomes" id="UP000002195">
    <property type="component" value="Chromosome 3"/>
</dbReference>
<dbReference type="GO" id="GO:0005576">
    <property type="term" value="C:extracellular region"/>
    <property type="evidence" value="ECO:0007669"/>
    <property type="project" value="UniProtKB-SubCell"/>
</dbReference>
<dbReference type="GO" id="GO:0031152">
    <property type="term" value="P:aggregation involved in sorocarp development"/>
    <property type="evidence" value="ECO:0000315"/>
    <property type="project" value="dictyBase"/>
</dbReference>
<dbReference type="GO" id="GO:0098609">
    <property type="term" value="P:cell-cell adhesion"/>
    <property type="evidence" value="ECO:0000315"/>
    <property type="project" value="dictyBase"/>
</dbReference>
<dbReference type="InterPro" id="IPR008139">
    <property type="entry name" value="SaposinB_dom"/>
</dbReference>
<dbReference type="SMART" id="SM00741">
    <property type="entry name" value="SapB"/>
    <property type="match status" value="1"/>
</dbReference>
<dbReference type="PROSITE" id="PS50015">
    <property type="entry name" value="SAP_B"/>
    <property type="match status" value="1"/>
</dbReference>
<proteinExistence type="evidence at transcript level"/>
<reference key="1">
    <citation type="journal article" date="2001" name="Dev. Growth Differ.">
        <title>Two cell-counting factors regulate the aggregate size of the cellular slime mold Dictyostelium discoideum.</title>
        <authorList>
            <person name="Okuwa T."/>
            <person name="Katayama T."/>
            <person name="Takano A."/>
            <person name="Kodaira K."/>
            <person name="Yasukawa H."/>
        </authorList>
    </citation>
    <scope>NUCLEOTIDE SEQUENCE [MRNA]</scope>
    <scope>FUNCTION</scope>
    <scope>DEVELOPMENTAL STAGE</scope>
    <scope>SUBCELLULAR LOCATION</scope>
    <scope>DISRUPTION PHENOTYPE</scope>
</reference>
<reference key="2">
    <citation type="journal article" date="2005" name="Nature">
        <title>The genome of the social amoeba Dictyostelium discoideum.</title>
        <authorList>
            <person name="Eichinger L."/>
            <person name="Pachebat J.A."/>
            <person name="Gloeckner G."/>
            <person name="Rajandream M.A."/>
            <person name="Sucgang R."/>
            <person name="Berriman M."/>
            <person name="Song J."/>
            <person name="Olsen R."/>
            <person name="Szafranski K."/>
            <person name="Xu Q."/>
            <person name="Tunggal B."/>
            <person name="Kummerfeld S."/>
            <person name="Madera M."/>
            <person name="Konfortov B.A."/>
            <person name="Rivero F."/>
            <person name="Bankier A.T."/>
            <person name="Lehmann R."/>
            <person name="Hamlin N."/>
            <person name="Davies R."/>
            <person name="Gaudet P."/>
            <person name="Fey P."/>
            <person name="Pilcher K."/>
            <person name="Chen G."/>
            <person name="Saunders D."/>
            <person name="Sodergren E.J."/>
            <person name="Davis P."/>
            <person name="Kerhornou A."/>
            <person name="Nie X."/>
            <person name="Hall N."/>
            <person name="Anjard C."/>
            <person name="Hemphill L."/>
            <person name="Bason N."/>
            <person name="Farbrother P."/>
            <person name="Desany B."/>
            <person name="Just E."/>
            <person name="Morio T."/>
            <person name="Rost R."/>
            <person name="Churcher C.M."/>
            <person name="Cooper J."/>
            <person name="Haydock S."/>
            <person name="van Driessche N."/>
            <person name="Cronin A."/>
            <person name="Goodhead I."/>
            <person name="Muzny D.M."/>
            <person name="Mourier T."/>
            <person name="Pain A."/>
            <person name="Lu M."/>
            <person name="Harper D."/>
            <person name="Lindsay R."/>
            <person name="Hauser H."/>
            <person name="James K.D."/>
            <person name="Quiles M."/>
            <person name="Madan Babu M."/>
            <person name="Saito T."/>
            <person name="Buchrieser C."/>
            <person name="Wardroper A."/>
            <person name="Felder M."/>
            <person name="Thangavelu M."/>
            <person name="Johnson D."/>
            <person name="Knights A."/>
            <person name="Loulseged H."/>
            <person name="Mungall K.L."/>
            <person name="Oliver K."/>
            <person name="Price C."/>
            <person name="Quail M.A."/>
            <person name="Urushihara H."/>
            <person name="Hernandez J."/>
            <person name="Rabbinowitsch E."/>
            <person name="Steffen D."/>
            <person name="Sanders M."/>
            <person name="Ma J."/>
            <person name="Kohara Y."/>
            <person name="Sharp S."/>
            <person name="Simmonds M.N."/>
            <person name="Spiegler S."/>
            <person name="Tivey A."/>
            <person name="Sugano S."/>
            <person name="White B."/>
            <person name="Walker D."/>
            <person name="Woodward J.R."/>
            <person name="Winckler T."/>
            <person name="Tanaka Y."/>
            <person name="Shaulsky G."/>
            <person name="Schleicher M."/>
            <person name="Weinstock G.M."/>
            <person name="Rosenthal A."/>
            <person name="Cox E.C."/>
            <person name="Chisholm R.L."/>
            <person name="Gibbs R.A."/>
            <person name="Loomis W.F."/>
            <person name="Platzer M."/>
            <person name="Kay R.R."/>
            <person name="Williams J.G."/>
            <person name="Dear P.H."/>
            <person name="Noegel A.A."/>
            <person name="Barrell B.G."/>
            <person name="Kuspa A."/>
        </authorList>
    </citation>
    <scope>NUCLEOTIDE SEQUENCE [LARGE SCALE GENOMIC DNA]</scope>
    <source>
        <strain>AX4</strain>
    </source>
</reference>
<keyword id="KW-1015">Disulfide bond</keyword>
<keyword id="KW-0325">Glycoprotein</keyword>
<keyword id="KW-1185">Reference proteome</keyword>
<keyword id="KW-0964">Secreted</keyword>
<keyword id="KW-0732">Signal</keyword>
<evidence type="ECO:0000255" key="1"/>
<evidence type="ECO:0000255" key="2">
    <source>
        <dbReference type="PROSITE-ProRule" id="PRU00415"/>
    </source>
</evidence>
<evidence type="ECO:0000256" key="3">
    <source>
        <dbReference type="SAM" id="MobiDB-lite"/>
    </source>
</evidence>
<evidence type="ECO:0000269" key="4">
    <source>
    </source>
</evidence>
<evidence type="ECO:0000305" key="5"/>
<feature type="signal peptide" evidence="1">
    <location>
        <begin position="1"/>
        <end position="19"/>
    </location>
</feature>
<feature type="chain" id="PRO_0000327909" description="Countin-2">
    <location>
        <begin position="20"/>
        <end position="254"/>
    </location>
</feature>
<feature type="domain" description="Saposin B-type" evidence="2">
    <location>
        <begin position="22"/>
        <end position="107"/>
    </location>
</feature>
<feature type="region of interest" description="Disordered" evidence="3">
    <location>
        <begin position="231"/>
        <end position="254"/>
    </location>
</feature>
<feature type="compositionally biased region" description="Gly residues" evidence="3">
    <location>
        <begin position="233"/>
        <end position="245"/>
    </location>
</feature>
<feature type="glycosylation site" description="N-linked (GlcNAc...) asparagine" evidence="2">
    <location>
        <position position="110"/>
    </location>
</feature>
<feature type="glycosylation site" description="N-linked (GlcNAc...) asparagine" evidence="2">
    <location>
        <position position="219"/>
    </location>
</feature>
<feature type="disulfide bond" evidence="2">
    <location>
        <begin position="26"/>
        <end position="103"/>
    </location>
</feature>
<feature type="disulfide bond" evidence="2">
    <location>
        <begin position="29"/>
        <end position="97"/>
    </location>
</feature>
<feature type="disulfide bond" evidence="2">
    <location>
        <begin position="56"/>
        <end position="68"/>
    </location>
</feature>